<keyword id="KW-0119">Carbohydrate metabolism</keyword>
<keyword id="KW-0313">Glucose metabolism</keyword>
<keyword id="KW-0378">Hydrolase</keyword>
<dbReference type="EC" id="3.1.1.31" evidence="1"/>
<dbReference type="EMBL" id="CP001138">
    <property type="protein sequence ID" value="ACH50128.1"/>
    <property type="molecule type" value="Genomic_DNA"/>
</dbReference>
<dbReference type="RefSeq" id="WP_000815468.1">
    <property type="nucleotide sequence ID" value="NC_011149.1"/>
</dbReference>
<dbReference type="SMR" id="B5F063"/>
<dbReference type="KEGG" id="sea:SeAg_B0821"/>
<dbReference type="HOGENOM" id="CLU_038716_2_0_6"/>
<dbReference type="UniPathway" id="UPA00115">
    <property type="reaction ID" value="UER00409"/>
</dbReference>
<dbReference type="Proteomes" id="UP000008819">
    <property type="component" value="Chromosome"/>
</dbReference>
<dbReference type="GO" id="GO:0005829">
    <property type="term" value="C:cytosol"/>
    <property type="evidence" value="ECO:0007669"/>
    <property type="project" value="TreeGrafter"/>
</dbReference>
<dbReference type="GO" id="GO:0017057">
    <property type="term" value="F:6-phosphogluconolactonase activity"/>
    <property type="evidence" value="ECO:0007669"/>
    <property type="project" value="UniProtKB-UniRule"/>
</dbReference>
<dbReference type="GO" id="GO:0006006">
    <property type="term" value="P:glucose metabolic process"/>
    <property type="evidence" value="ECO:0007669"/>
    <property type="project" value="UniProtKB-KW"/>
</dbReference>
<dbReference type="GO" id="GO:0009051">
    <property type="term" value="P:pentose-phosphate shunt, oxidative branch"/>
    <property type="evidence" value="ECO:0007669"/>
    <property type="project" value="UniProtKB-UniRule"/>
</dbReference>
<dbReference type="FunFam" id="2.130.10.10:FF:000051">
    <property type="entry name" value="6-phosphogluconolactonase"/>
    <property type="match status" value="1"/>
</dbReference>
<dbReference type="Gene3D" id="2.130.10.10">
    <property type="entry name" value="YVTN repeat-like/Quinoprotein amine dehydrogenase"/>
    <property type="match status" value="1"/>
</dbReference>
<dbReference type="HAMAP" id="MF_01605">
    <property type="entry name" value="6P_gluconolactonase"/>
    <property type="match status" value="1"/>
</dbReference>
<dbReference type="InterPro" id="IPR022528">
    <property type="entry name" value="6-phosphogluconolactonase_YbhE"/>
</dbReference>
<dbReference type="InterPro" id="IPR050282">
    <property type="entry name" value="Cycloisomerase_2"/>
</dbReference>
<dbReference type="InterPro" id="IPR019405">
    <property type="entry name" value="Lactonase_7-beta_prop"/>
</dbReference>
<dbReference type="InterPro" id="IPR011045">
    <property type="entry name" value="N2O_reductase_N"/>
</dbReference>
<dbReference type="InterPro" id="IPR015943">
    <property type="entry name" value="WD40/YVTN_repeat-like_dom_sf"/>
</dbReference>
<dbReference type="NCBIfam" id="NF008258">
    <property type="entry name" value="PRK11028.1"/>
    <property type="match status" value="1"/>
</dbReference>
<dbReference type="PANTHER" id="PTHR30344:SF1">
    <property type="entry name" value="6-PHOSPHOGLUCONOLACTONASE"/>
    <property type="match status" value="1"/>
</dbReference>
<dbReference type="PANTHER" id="PTHR30344">
    <property type="entry name" value="6-PHOSPHOGLUCONOLACTONASE-RELATED"/>
    <property type="match status" value="1"/>
</dbReference>
<dbReference type="Pfam" id="PF10282">
    <property type="entry name" value="Lactonase"/>
    <property type="match status" value="1"/>
</dbReference>
<dbReference type="SUPFAM" id="SSF50974">
    <property type="entry name" value="Nitrous oxide reductase, N-terminal domain"/>
    <property type="match status" value="2"/>
</dbReference>
<proteinExistence type="inferred from homology"/>
<protein>
    <recommendedName>
        <fullName evidence="1">6-phosphogluconolactonase</fullName>
        <shortName evidence="1">6-P-gluconolactonase</shortName>
        <ecNumber evidence="1">3.1.1.31</ecNumber>
    </recommendedName>
</protein>
<feature type="chain" id="PRO_1000148161" description="6-phosphogluconolactonase">
    <location>
        <begin position="1"/>
        <end position="331"/>
    </location>
</feature>
<gene>
    <name evidence="1" type="primary">pgl</name>
    <name type="ordered locus">SeAg_B0821</name>
</gene>
<reference key="1">
    <citation type="journal article" date="2011" name="J. Bacteriol.">
        <title>Comparative genomics of 28 Salmonella enterica isolates: evidence for CRISPR-mediated adaptive sublineage evolution.</title>
        <authorList>
            <person name="Fricke W.F."/>
            <person name="Mammel M.K."/>
            <person name="McDermott P.F."/>
            <person name="Tartera C."/>
            <person name="White D.G."/>
            <person name="Leclerc J.E."/>
            <person name="Ravel J."/>
            <person name="Cebula T.A."/>
        </authorList>
    </citation>
    <scope>NUCLEOTIDE SEQUENCE [LARGE SCALE GENOMIC DNA]</scope>
    <source>
        <strain>SL483</strain>
    </source>
</reference>
<evidence type="ECO:0000255" key="1">
    <source>
        <dbReference type="HAMAP-Rule" id="MF_01605"/>
    </source>
</evidence>
<sequence>MKQTVYTASPESQQIHVWSLNHEGTLTLVQVVDVPGQVQPMVVSPDKRYLYVGVRPEFRVLAYRIAPDDGALTFAAESALPGSPTHISTDHHGRFVFVGSYNAGNVSVTRLQDGLPVELVDVVEGLDGCHSANITPDNRTLWVPALKQDRICLFTLSDDGHLVAQEPAEVNTVEGAGPRHMVFHPNRQYAYCVNELNSSVDVWQLKNPHGEIECVQTLDMMPADFSDTRWAADIHITPDGRHLYACDRTASLITVFSVSEDGSVLSVEGFQPTEAQPRGFNIDNSGKYLIAAGQKSHHIAVYEITGTQGLLTEKGRYAVGQGPMWVVVNAY</sequence>
<comment type="function">
    <text evidence="1">Catalyzes the hydrolysis of 6-phosphogluconolactone to 6-phosphogluconate.</text>
</comment>
<comment type="catalytic activity">
    <reaction evidence="1">
        <text>6-phospho-D-glucono-1,5-lactone + H2O = 6-phospho-D-gluconate + H(+)</text>
        <dbReference type="Rhea" id="RHEA:12556"/>
        <dbReference type="ChEBI" id="CHEBI:15377"/>
        <dbReference type="ChEBI" id="CHEBI:15378"/>
        <dbReference type="ChEBI" id="CHEBI:57955"/>
        <dbReference type="ChEBI" id="CHEBI:58759"/>
        <dbReference type="EC" id="3.1.1.31"/>
    </reaction>
</comment>
<comment type="pathway">
    <text evidence="1">Carbohydrate degradation; pentose phosphate pathway; D-ribulose 5-phosphate from D-glucose 6-phosphate (oxidative stage): step 2/3.</text>
</comment>
<comment type="similarity">
    <text evidence="1">Belongs to the cycloisomerase 2 family.</text>
</comment>
<organism>
    <name type="scientific">Salmonella agona (strain SL483)</name>
    <dbReference type="NCBI Taxonomy" id="454166"/>
    <lineage>
        <taxon>Bacteria</taxon>
        <taxon>Pseudomonadati</taxon>
        <taxon>Pseudomonadota</taxon>
        <taxon>Gammaproteobacteria</taxon>
        <taxon>Enterobacterales</taxon>
        <taxon>Enterobacteriaceae</taxon>
        <taxon>Salmonella</taxon>
    </lineage>
</organism>
<accession>B5F063</accession>
<name>6PGL_SALA4</name>